<organism>
    <name type="scientific">Dictyostelium discoideum</name>
    <name type="common">Social amoeba</name>
    <dbReference type="NCBI Taxonomy" id="44689"/>
    <lineage>
        <taxon>Eukaryota</taxon>
        <taxon>Amoebozoa</taxon>
        <taxon>Evosea</taxon>
        <taxon>Eumycetozoa</taxon>
        <taxon>Dictyostelia</taxon>
        <taxon>Dictyosteliales</taxon>
        <taxon>Dictyosteliaceae</taxon>
        <taxon>Dictyostelium</taxon>
    </lineage>
</organism>
<gene>
    <name type="ORF">DDB_G0283069</name>
</gene>
<reference key="1">
    <citation type="journal article" date="2005" name="Nature">
        <title>The genome of the social amoeba Dictyostelium discoideum.</title>
        <authorList>
            <person name="Eichinger L."/>
            <person name="Pachebat J.A."/>
            <person name="Gloeckner G."/>
            <person name="Rajandream M.A."/>
            <person name="Sucgang R."/>
            <person name="Berriman M."/>
            <person name="Song J."/>
            <person name="Olsen R."/>
            <person name="Szafranski K."/>
            <person name="Xu Q."/>
            <person name="Tunggal B."/>
            <person name="Kummerfeld S."/>
            <person name="Madera M."/>
            <person name="Konfortov B.A."/>
            <person name="Rivero F."/>
            <person name="Bankier A.T."/>
            <person name="Lehmann R."/>
            <person name="Hamlin N."/>
            <person name="Davies R."/>
            <person name="Gaudet P."/>
            <person name="Fey P."/>
            <person name="Pilcher K."/>
            <person name="Chen G."/>
            <person name="Saunders D."/>
            <person name="Sodergren E.J."/>
            <person name="Davis P."/>
            <person name="Kerhornou A."/>
            <person name="Nie X."/>
            <person name="Hall N."/>
            <person name="Anjard C."/>
            <person name="Hemphill L."/>
            <person name="Bason N."/>
            <person name="Farbrother P."/>
            <person name="Desany B."/>
            <person name="Just E."/>
            <person name="Morio T."/>
            <person name="Rost R."/>
            <person name="Churcher C.M."/>
            <person name="Cooper J."/>
            <person name="Haydock S."/>
            <person name="van Driessche N."/>
            <person name="Cronin A."/>
            <person name="Goodhead I."/>
            <person name="Muzny D.M."/>
            <person name="Mourier T."/>
            <person name="Pain A."/>
            <person name="Lu M."/>
            <person name="Harper D."/>
            <person name="Lindsay R."/>
            <person name="Hauser H."/>
            <person name="James K.D."/>
            <person name="Quiles M."/>
            <person name="Madan Babu M."/>
            <person name="Saito T."/>
            <person name="Buchrieser C."/>
            <person name="Wardroper A."/>
            <person name="Felder M."/>
            <person name="Thangavelu M."/>
            <person name="Johnson D."/>
            <person name="Knights A."/>
            <person name="Loulseged H."/>
            <person name="Mungall K.L."/>
            <person name="Oliver K."/>
            <person name="Price C."/>
            <person name="Quail M.A."/>
            <person name="Urushihara H."/>
            <person name="Hernandez J."/>
            <person name="Rabbinowitsch E."/>
            <person name="Steffen D."/>
            <person name="Sanders M."/>
            <person name="Ma J."/>
            <person name="Kohara Y."/>
            <person name="Sharp S."/>
            <person name="Simmonds M.N."/>
            <person name="Spiegler S."/>
            <person name="Tivey A."/>
            <person name="Sugano S."/>
            <person name="White B."/>
            <person name="Walker D."/>
            <person name="Woodward J.R."/>
            <person name="Winckler T."/>
            <person name="Tanaka Y."/>
            <person name="Shaulsky G."/>
            <person name="Schleicher M."/>
            <person name="Weinstock G.M."/>
            <person name="Rosenthal A."/>
            <person name="Cox E.C."/>
            <person name="Chisholm R.L."/>
            <person name="Gibbs R.A."/>
            <person name="Loomis W.F."/>
            <person name="Platzer M."/>
            <person name="Kay R.R."/>
            <person name="Williams J.G."/>
            <person name="Dear P.H."/>
            <person name="Noegel A.A."/>
            <person name="Barrell B.G."/>
            <person name="Kuspa A."/>
        </authorList>
    </citation>
    <scope>NUCLEOTIDE SEQUENCE [LARGE SCALE GENOMIC DNA]</scope>
    <source>
        <strain>AX4</strain>
    </source>
</reference>
<feature type="chain" id="PRO_0000351265" description="Putative uncharacterized protein DDB_G0283069">
    <location>
        <begin position="1"/>
        <end position="78"/>
    </location>
</feature>
<feature type="region of interest" description="Disordered" evidence="1">
    <location>
        <begin position="20"/>
        <end position="78"/>
    </location>
</feature>
<feature type="compositionally biased region" description="Acidic residues" evidence="1">
    <location>
        <begin position="31"/>
        <end position="64"/>
    </location>
</feature>
<dbReference type="EMBL" id="AAFI02000049">
    <property type="protein sequence ID" value="EAL65978.1"/>
    <property type="molecule type" value="Genomic_DNA"/>
</dbReference>
<dbReference type="RefSeq" id="XP_639324.1">
    <property type="nucleotide sequence ID" value="XM_634232.1"/>
</dbReference>
<dbReference type="PaxDb" id="44689-DDB0218433"/>
<dbReference type="EnsemblProtists" id="EAL65978">
    <property type="protein sequence ID" value="EAL65978"/>
    <property type="gene ID" value="DDB_G0283069"/>
</dbReference>
<dbReference type="GeneID" id="8623895"/>
<dbReference type="KEGG" id="ddi:DDB_G0283069"/>
<dbReference type="dictyBase" id="DDB_G0283069"/>
<dbReference type="HOGENOM" id="CLU_2627123_0_0_1"/>
<dbReference type="InParanoid" id="Q54RM7"/>
<dbReference type="PRO" id="PR:Q54RM7"/>
<dbReference type="Proteomes" id="UP000002195">
    <property type="component" value="Chromosome 4"/>
</dbReference>
<keyword id="KW-1185">Reference proteome</keyword>
<accession>Q54RM7</accession>
<proteinExistence type="predicted"/>
<name>Y8433_DICDI</name>
<evidence type="ECO:0000256" key="1">
    <source>
        <dbReference type="SAM" id="MobiDB-lite"/>
    </source>
</evidence>
<sequence length="78" mass="8400">MQKEVTKPIEIPANISLNNLQDLFPPHFGNEEADEDDEDGDKYGDDDGEFYGDNDGDNDGDNDGVNDGVGDGPPSTLL</sequence>
<protein>
    <recommendedName>
        <fullName>Putative uncharacterized protein DDB_G0283069</fullName>
    </recommendedName>
</protein>